<sequence>MSATKPRLRSTQWFGTNDKNGFMYRSWMKNQGIPDHEFDGRPIIGICNTWSELTPCNAHFRKLAEHVKRGISEAGGFPVEFPVFSNGESNLRPSAMLTRNLASMDVEEAIRGNPIDAVVLLAGCDKTTPALLMGAASCDVPAIVVSGGPMLNGKLEGKNIGSGTAVWQLHEALKAGEIDVHHFLSAEAGMSRSAGTCNTMGTASTMACMAEALGVALPHNAAIPAVDSRRYVLAHMSGIRIVEMALEGLVLSKILTRAAFENAIRANAAIGGSTNAVIHLKAIAGRIGVPLELEDWMRIGRDTPTIVDLMPSGRFPMEEFYYAGGLPAVLRRLGEGGLLPNPDALTVNGKSLWDNVREAPNYDEEVIRPLDRPLIADGGIRILRGNLAPRGAVLKPSAASPELLKHRGRAVVFENLDHYKATINDEALDIDASSVMVLKNCGPRGYPGMAEVGNMGLPPKLLRQGVKDMVRISDARMSGTAYGTVVLHVAPEAAAGGPLAAVRNGDWIELDCEAGTLHLDITDDELHRRLSDVDPTAAPGVAGQLGKGGYARLYIDHVLQADEGCDLDFLVGTRGAEVPSHSH</sequence>
<comment type="function">
    <text evidence="1">Catalyzes the dehydration of L-arabonate to L-2-keto-3-deoxyarabonate (L-KDA). Is involved in a degradation pathway of L-arabinose that allows A.brasilense to grow on L-arabinose as a sole carbon source. To a lesser extent, can also use D-xylonate as substrate, but not D-galactonate, D-arabonate, and D-gluconate.</text>
</comment>
<comment type="catalytic activity">
    <reaction evidence="1">
        <text>L-arabinonate = 2-dehydro-3-deoxy-L-arabinonate + H2O</text>
        <dbReference type="Rhea" id="RHEA:20968"/>
        <dbReference type="ChEBI" id="CHEBI:15377"/>
        <dbReference type="ChEBI" id="CHEBI:16501"/>
        <dbReference type="ChEBI" id="CHEBI:35173"/>
        <dbReference type="EC" id="4.2.1.25"/>
    </reaction>
</comment>
<comment type="cofactor">
    <cofactor evidence="1">
        <name>[4Fe-4S] cluster</name>
        <dbReference type="ChEBI" id="CHEBI:49883"/>
    </cofactor>
    <text evidence="1">Binds 1 [4Fe-4S] cluster.</text>
</comment>
<comment type="activity regulation">
    <text evidence="1">Activity is enhanced by Mg(2+), being optimal with a concentration of 1-10 mM Mg(2+).</text>
</comment>
<comment type="subunit">
    <text evidence="1">Homodimer.</text>
</comment>
<comment type="similarity">
    <text evidence="2">Belongs to the IlvD/Edd family.</text>
</comment>
<dbReference type="EC" id="4.2.1.25"/>
<dbReference type="EMBL" id="AB241136">
    <property type="protein sequence ID" value="BAE94269.1"/>
    <property type="molecule type" value="Genomic_DNA"/>
</dbReference>
<dbReference type="SMR" id="Q1JUQ1"/>
<dbReference type="BRENDA" id="4.2.1.25">
    <property type="organism ID" value="611"/>
</dbReference>
<dbReference type="GO" id="GO:0051539">
    <property type="term" value="F:4 iron, 4 sulfur cluster binding"/>
    <property type="evidence" value="ECO:0000314"/>
    <property type="project" value="UniProtKB"/>
</dbReference>
<dbReference type="GO" id="GO:0050020">
    <property type="term" value="F:L-arabinonate dehydratase activity"/>
    <property type="evidence" value="ECO:0000314"/>
    <property type="project" value="UniProtKB"/>
</dbReference>
<dbReference type="GO" id="GO:0046872">
    <property type="term" value="F:metal ion binding"/>
    <property type="evidence" value="ECO:0007669"/>
    <property type="project" value="UniProtKB-KW"/>
</dbReference>
<dbReference type="GO" id="GO:0042803">
    <property type="term" value="F:protein homodimerization activity"/>
    <property type="evidence" value="ECO:0000314"/>
    <property type="project" value="UniProtKB"/>
</dbReference>
<dbReference type="GO" id="GO:0019570">
    <property type="term" value="P:L-arabinose catabolic process to 2-oxoglutarate"/>
    <property type="evidence" value="ECO:0000314"/>
    <property type="project" value="UniProtKB"/>
</dbReference>
<dbReference type="FunFam" id="3.50.30.80:FF:000001">
    <property type="entry name" value="Dihydroxy-acid dehydratase"/>
    <property type="match status" value="1"/>
</dbReference>
<dbReference type="Gene3D" id="3.50.30.80">
    <property type="entry name" value="IlvD/EDD C-terminal domain-like"/>
    <property type="match status" value="1"/>
</dbReference>
<dbReference type="InterPro" id="IPR042096">
    <property type="entry name" value="Dihydro-acid_dehy_C"/>
</dbReference>
<dbReference type="InterPro" id="IPR020558">
    <property type="entry name" value="DiOHA_6PGluconate_deHydtase_CS"/>
</dbReference>
<dbReference type="InterPro" id="IPR056740">
    <property type="entry name" value="ILV_EDD_C"/>
</dbReference>
<dbReference type="InterPro" id="IPR000581">
    <property type="entry name" value="ILV_EDD_N"/>
</dbReference>
<dbReference type="InterPro" id="IPR037237">
    <property type="entry name" value="IlvD/EDD_N"/>
</dbReference>
<dbReference type="InterPro" id="IPR052352">
    <property type="entry name" value="Sugar_Degrad_Dehydratases"/>
</dbReference>
<dbReference type="NCBIfam" id="NF004784">
    <property type="entry name" value="PRK06131.1"/>
    <property type="match status" value="1"/>
</dbReference>
<dbReference type="NCBIfam" id="NF009560">
    <property type="entry name" value="PRK13017.1"/>
    <property type="match status" value="1"/>
</dbReference>
<dbReference type="PANTHER" id="PTHR43183:SF1">
    <property type="entry name" value="HYPOTHETICAL DIHYDROXY-ACID DEHYDRATASE (EUROFUNG)-RELATED"/>
    <property type="match status" value="1"/>
</dbReference>
<dbReference type="PANTHER" id="PTHR43183">
    <property type="entry name" value="HYPOTHETICAL DIHYDROXYACID DEHYDRATASE (EUROFUNG)-RELATED"/>
    <property type="match status" value="1"/>
</dbReference>
<dbReference type="Pfam" id="PF24877">
    <property type="entry name" value="ILV_EDD_C"/>
    <property type="match status" value="1"/>
</dbReference>
<dbReference type="Pfam" id="PF00920">
    <property type="entry name" value="ILVD_EDD_N"/>
    <property type="match status" value="1"/>
</dbReference>
<dbReference type="SUPFAM" id="SSF143975">
    <property type="entry name" value="IlvD/EDD N-terminal domain-like"/>
    <property type="match status" value="1"/>
</dbReference>
<dbReference type="SUPFAM" id="SSF52016">
    <property type="entry name" value="LeuD/IlvD-like"/>
    <property type="match status" value="1"/>
</dbReference>
<dbReference type="PROSITE" id="PS00886">
    <property type="entry name" value="ILVD_EDD_1"/>
    <property type="match status" value="1"/>
</dbReference>
<protein>
    <recommendedName>
        <fullName>L-arabonate dehydratase</fullName>
        <ecNumber>4.2.1.25</ecNumber>
    </recommendedName>
    <alternativeName>
        <fullName>L-arabinonate dehydratase</fullName>
    </alternativeName>
</protein>
<proteinExistence type="evidence at protein level"/>
<name>ARADA_AZOBR</name>
<keyword id="KW-0004">4Fe-4S</keyword>
<keyword id="KW-0054">Arabinose catabolism</keyword>
<keyword id="KW-0119">Carbohydrate metabolism</keyword>
<keyword id="KW-0903">Direct protein sequencing</keyword>
<keyword id="KW-0408">Iron</keyword>
<keyword id="KW-0411">Iron-sulfur</keyword>
<keyword id="KW-0456">Lyase</keyword>
<keyword id="KW-0479">Metal-binding</keyword>
<gene>
    <name type="primary">araC</name>
</gene>
<organism>
    <name type="scientific">Azospirillum brasilense</name>
    <dbReference type="NCBI Taxonomy" id="192"/>
    <lineage>
        <taxon>Bacteria</taxon>
        <taxon>Pseudomonadati</taxon>
        <taxon>Pseudomonadota</taxon>
        <taxon>Alphaproteobacteria</taxon>
        <taxon>Rhodospirillales</taxon>
        <taxon>Azospirillaceae</taxon>
        <taxon>Azospirillum</taxon>
    </lineage>
</organism>
<evidence type="ECO:0000269" key="1">
    <source>
    </source>
</evidence>
<evidence type="ECO:0000305" key="2"/>
<evidence type="ECO:0000305" key="3">
    <source>
    </source>
</evidence>
<feature type="chain" id="PRO_0000418506" description="L-arabonate dehydratase">
    <location>
        <begin position="1"/>
        <end position="583"/>
    </location>
</feature>
<feature type="binding site" evidence="3">
    <location>
        <position position="56"/>
    </location>
    <ligand>
        <name>[4Fe-4S] cluster</name>
        <dbReference type="ChEBI" id="CHEBI:49883"/>
    </ligand>
</feature>
<feature type="binding site" evidence="1">
    <location>
        <position position="124"/>
    </location>
    <ligand>
        <name>[4Fe-4S] cluster</name>
        <dbReference type="ChEBI" id="CHEBI:49883"/>
    </ligand>
</feature>
<feature type="binding site" evidence="1">
    <location>
        <position position="197"/>
    </location>
    <ligand>
        <name>[4Fe-4S] cluster</name>
        <dbReference type="ChEBI" id="CHEBI:49883"/>
    </ligand>
</feature>
<feature type="mutagenesis site" description="2-fold reduction in activity and still binds a 4Fe-4S cluster." evidence="1">
    <original>C</original>
    <variation>A</variation>
    <location>
        <position position="47"/>
    </location>
</feature>
<feature type="mutagenesis site" description="Loss of activity but seems to be able to bind a Fe-S cluster." evidence="1">
    <original>C</original>
    <variation>A</variation>
    <location>
        <position position="56"/>
    </location>
</feature>
<feature type="mutagenesis site" description="Loss of activity and no 4Fe-4S cluster binding." evidence="1">
    <original>C</original>
    <variation>A</variation>
    <location>
        <position position="124"/>
    </location>
</feature>
<feature type="mutagenesis site" description="Loss of activity and no 4Fe-4S cluster binding." evidence="1">
    <original>C</original>
    <variation>A</variation>
    <location>
        <position position="197"/>
    </location>
</feature>
<feature type="mutagenesis site" description="Increase in activity and still binds a 4Fe-4S cluster." evidence="1">
    <original>C</original>
    <variation>A</variation>
    <location>
        <position position="441"/>
    </location>
</feature>
<accession>Q1JUQ1</accession>
<reference key="1">
    <citation type="journal article" date="2006" name="J. Biol. Chem.">
        <title>Identification and characterization of L-arabonate dehydratase, L-2-keto-3-deoxyarabonate dehydratase and L-arabinolactonase involved in an alternative pathway of L-arabinose metabolism: novel evolutionary insight into sugar metabolism.</title>
        <authorList>
            <person name="Watanabe S."/>
            <person name="Shimada N."/>
            <person name="Tajima K."/>
            <person name="Kodaki T."/>
            <person name="Makino K."/>
        </authorList>
    </citation>
    <scope>NUCLEOTIDE SEQUENCE [GENOMIC DNA]</scope>
    <scope>PROTEIN SEQUENCE OF 3-17</scope>
    <scope>FUNCTION</scope>
    <scope>CATALYTIC ACTIVITY</scope>
    <scope>SUBSTRATE SPECIFICITY</scope>
    <scope>COFACTOR</scope>
    <scope>ACTIVITY REGULATION</scope>
    <scope>PATHWAY</scope>
    <scope>SUBUNIT</scope>
    <scope>METAL-BINDING SITES</scope>
    <scope>MUTAGENESIS OF CYS-47; CYS-56; CYS-124; CYS-197 AND CYS-441</scope>
    <source>
        <strain>ATCC 29145 / DSM 1690 / IMET 11303 / Sp7</strain>
    </source>
</reference>
<reference key="2">
    <citation type="journal article" date="1982" name="J. Bacteriol.">
        <title>L-arabinose metabolism in Azospirillum brasiliense.</title>
        <authorList>
            <person name="Novick N.J."/>
            <person name="Tyler M.E."/>
        </authorList>
    </citation>
    <scope>PATHWAY</scope>
    <source>
        <strain>ATCC 29145 / DSM 1690 / IMET 11303 / Sp7</strain>
    </source>
</reference>